<proteinExistence type="inferred from homology"/>
<gene>
    <name type="ORF">K05C4.2</name>
</gene>
<protein>
    <recommendedName>
        <fullName evidence="1">Protein jagunal homolog</fullName>
    </recommendedName>
</protein>
<comment type="subcellular location">
    <subcellularLocation>
        <location evidence="1">Endoplasmic reticulum membrane</location>
        <topology evidence="1">Multi-pass membrane protein</topology>
    </subcellularLocation>
</comment>
<comment type="similarity">
    <text evidence="3">Belongs to the jagunal family.</text>
</comment>
<reference key="1">
    <citation type="journal article" date="1998" name="Science">
        <title>Genome sequence of the nematode C. elegans: a platform for investigating biology.</title>
        <authorList>
            <consortium name="The C. elegans sequencing consortium"/>
        </authorList>
    </citation>
    <scope>NUCLEOTIDE SEQUENCE [LARGE SCALE GENOMIC DNA]</scope>
    <source>
        <strain>Bristol N2</strain>
    </source>
</reference>
<reference key="2">
    <citation type="journal article" date="2007" name="J. Cell Biol.">
        <title>Jagunal is required for reorganizing the endoplasmic reticulum during Drosophila oogenesis.</title>
        <authorList>
            <person name="Lee S."/>
            <person name="Cooley L."/>
        </authorList>
    </citation>
    <scope>IDENTIFICATION</scope>
</reference>
<keyword id="KW-0256">Endoplasmic reticulum</keyword>
<keyword id="KW-0472">Membrane</keyword>
<keyword id="KW-1185">Reference proteome</keyword>
<keyword id="KW-0812">Transmembrane</keyword>
<keyword id="KW-1133">Transmembrane helix</keyword>
<accession>Q9XUU9</accession>
<dbReference type="EMBL" id="Z81564">
    <property type="protein sequence ID" value="CAB04568.1"/>
    <property type="molecule type" value="Genomic_DNA"/>
</dbReference>
<dbReference type="PIR" id="T23337">
    <property type="entry name" value="T23337"/>
</dbReference>
<dbReference type="RefSeq" id="NP_001379212.1">
    <property type="nucleotide sequence ID" value="NM_001392979.1"/>
</dbReference>
<dbReference type="RefSeq" id="NP_493559.1">
    <property type="nucleotide sequence ID" value="NM_061158.5"/>
</dbReference>
<dbReference type="SMR" id="Q9XUU9"/>
<dbReference type="BioGRID" id="38720">
    <property type="interactions" value="3"/>
</dbReference>
<dbReference type="FunCoup" id="Q9XUU9">
    <property type="interactions" value="2574"/>
</dbReference>
<dbReference type="STRING" id="6239.K05C4.2.2"/>
<dbReference type="PaxDb" id="6239-K05C4.2"/>
<dbReference type="PeptideAtlas" id="Q9XUU9"/>
<dbReference type="EnsemblMetazoa" id="K05C4.2.1">
    <property type="protein sequence ID" value="K05C4.2.1"/>
    <property type="gene ID" value="WBGene00010579"/>
</dbReference>
<dbReference type="EnsemblMetazoa" id="K05C4.2.2">
    <property type="protein sequence ID" value="K05C4.2.2"/>
    <property type="gene ID" value="WBGene00010579"/>
</dbReference>
<dbReference type="GeneID" id="173335"/>
<dbReference type="UCSC" id="K05C4.2.2">
    <property type="organism name" value="c. elegans"/>
</dbReference>
<dbReference type="AGR" id="WB:WBGene00010579"/>
<dbReference type="WormBase" id="K05C4.2">
    <property type="protein sequence ID" value="CE19970"/>
    <property type="gene ID" value="WBGene00010579"/>
</dbReference>
<dbReference type="eggNOG" id="KOG4054">
    <property type="taxonomic scope" value="Eukaryota"/>
</dbReference>
<dbReference type="GeneTree" id="ENSGT00390000005596"/>
<dbReference type="HOGENOM" id="CLU_121621_0_0_1"/>
<dbReference type="InParanoid" id="Q9XUU9"/>
<dbReference type="OMA" id="IWILMAA"/>
<dbReference type="OrthoDB" id="8914197at2759"/>
<dbReference type="PhylomeDB" id="Q9XUU9"/>
<dbReference type="PRO" id="PR:Q9XUU9"/>
<dbReference type="Proteomes" id="UP000001940">
    <property type="component" value="Chromosome I"/>
</dbReference>
<dbReference type="Bgee" id="WBGene00010579">
    <property type="expression patterns" value="Expressed in larva and 4 other cell types or tissues"/>
</dbReference>
<dbReference type="GO" id="GO:0005789">
    <property type="term" value="C:endoplasmic reticulum membrane"/>
    <property type="evidence" value="ECO:0000318"/>
    <property type="project" value="GO_Central"/>
</dbReference>
<dbReference type="GO" id="GO:0007029">
    <property type="term" value="P:endoplasmic reticulum organization"/>
    <property type="evidence" value="ECO:0000318"/>
    <property type="project" value="GO_Central"/>
</dbReference>
<dbReference type="GO" id="GO:0016192">
    <property type="term" value="P:vesicle-mediated transport"/>
    <property type="evidence" value="ECO:0000318"/>
    <property type="project" value="GO_Central"/>
</dbReference>
<dbReference type="InterPro" id="IPR009787">
    <property type="entry name" value="Jagunal"/>
</dbReference>
<dbReference type="PANTHER" id="PTHR20955">
    <property type="entry name" value="PROTEIN JAGUNAL HOMOLOG 1"/>
    <property type="match status" value="1"/>
</dbReference>
<dbReference type="PANTHER" id="PTHR20955:SF1">
    <property type="entry name" value="PROTEIN JAGUNAL HOMOLOG 1"/>
    <property type="match status" value="1"/>
</dbReference>
<dbReference type="Pfam" id="PF07086">
    <property type="entry name" value="Jagunal"/>
    <property type="match status" value="1"/>
</dbReference>
<feature type="chain" id="PRO_0000313618" description="Protein jagunal homolog">
    <location>
        <begin position="1"/>
        <end position="189"/>
    </location>
</feature>
<feature type="topological domain" description="Cytoplasmic" evidence="2">
    <location>
        <begin position="1"/>
        <end position="34"/>
    </location>
</feature>
<feature type="transmembrane region" description="Helical" evidence="2">
    <location>
        <begin position="35"/>
        <end position="55"/>
    </location>
</feature>
<feature type="topological domain" description="Lumenal" evidence="2">
    <location>
        <begin position="56"/>
        <end position="78"/>
    </location>
</feature>
<feature type="transmembrane region" description="Helical" evidence="2">
    <location>
        <begin position="79"/>
        <end position="99"/>
    </location>
</feature>
<feature type="topological domain" description="Cytoplasmic" evidence="2">
    <location>
        <begin position="100"/>
        <end position="105"/>
    </location>
</feature>
<feature type="transmembrane region" description="Helical" evidence="2">
    <location>
        <begin position="106"/>
        <end position="126"/>
    </location>
</feature>
<feature type="topological domain" description="Lumenal" evidence="2">
    <location>
        <begin position="127"/>
        <end position="150"/>
    </location>
</feature>
<feature type="transmembrane region" description="Helical" evidence="2">
    <location>
        <begin position="151"/>
        <end position="171"/>
    </location>
</feature>
<feature type="topological domain" description="Cytoplasmic" evidence="2">
    <location>
        <begin position="172"/>
        <end position="189"/>
    </location>
</feature>
<name>JAGN_CAEEL</name>
<evidence type="ECO:0000250" key="1">
    <source>
        <dbReference type="UniProtKB" id="Q7K1V5"/>
    </source>
</evidence>
<evidence type="ECO:0000255" key="2"/>
<evidence type="ECO:0000305" key="3"/>
<organism>
    <name type="scientific">Caenorhabditis elegans</name>
    <dbReference type="NCBI Taxonomy" id="6239"/>
    <lineage>
        <taxon>Eukaryota</taxon>
        <taxon>Metazoa</taxon>
        <taxon>Ecdysozoa</taxon>
        <taxon>Nematoda</taxon>
        <taxon>Chromadorea</taxon>
        <taxon>Rhabditida</taxon>
        <taxon>Rhabditina</taxon>
        <taxon>Rhabditomorpha</taxon>
        <taxon>Rhabditoidea</taxon>
        <taxon>Rhabditidae</taxon>
        <taxon>Peloderinae</taxon>
        <taxon>Caenorhabditis</taxon>
    </lineage>
</organism>
<sequence>MSSRGVRAAGTDGTDFQNRQRVAQHYQESAQYKSILKWFFVPHFLILVFMWLKVGSELLRTNFGWKNAFFDRLDMPSAYPWEYVWCFSFIPIVLAIYSFQRNKLKILHYAYYAEFVVGIFPCMIGLGGQLPELMEYAQDMEGSNTPTFKGIFPMVIIWYIFFAVALQIHGFSMYFMHHLAAAWAPVKRD</sequence>